<dbReference type="EC" id="3.6.1.5"/>
<dbReference type="EMBL" id="AC126222">
    <property type="protein sequence ID" value="AAN65004.1"/>
    <property type="molecule type" value="Genomic_DNA"/>
</dbReference>
<dbReference type="EMBL" id="DP000009">
    <property type="protein sequence ID" value="ABF95735.1"/>
    <property type="molecule type" value="Genomic_DNA"/>
</dbReference>
<dbReference type="EMBL" id="AP014959">
    <property type="status" value="NOT_ANNOTATED_CDS"/>
    <property type="molecule type" value="Genomic_DNA"/>
</dbReference>
<dbReference type="RefSeq" id="XP_015632681.1">
    <property type="nucleotide sequence ID" value="XM_015777195.1"/>
</dbReference>
<dbReference type="SMR" id="Q8H7L6"/>
<dbReference type="FunCoup" id="Q8H7L6">
    <property type="interactions" value="3394"/>
</dbReference>
<dbReference type="STRING" id="39947.Q8H7L6"/>
<dbReference type="PaxDb" id="39947-Q8H7L6"/>
<dbReference type="InParanoid" id="Q8H7L6"/>
<dbReference type="OrthoDB" id="6372431at2759"/>
<dbReference type="Proteomes" id="UP000000763">
    <property type="component" value="Chromosome 3"/>
</dbReference>
<dbReference type="Proteomes" id="UP000059680">
    <property type="component" value="Chromosome 3"/>
</dbReference>
<dbReference type="GO" id="GO:0016020">
    <property type="term" value="C:membrane"/>
    <property type="evidence" value="ECO:0000318"/>
    <property type="project" value="GO_Central"/>
</dbReference>
<dbReference type="GO" id="GO:0004050">
    <property type="term" value="F:apyrase activity"/>
    <property type="evidence" value="ECO:0007669"/>
    <property type="project" value="UniProtKB-EC"/>
</dbReference>
<dbReference type="GO" id="GO:0005524">
    <property type="term" value="F:ATP binding"/>
    <property type="evidence" value="ECO:0007669"/>
    <property type="project" value="UniProtKB-KW"/>
</dbReference>
<dbReference type="GO" id="GO:0017110">
    <property type="term" value="F:nucleoside diphosphate phosphatase activity"/>
    <property type="evidence" value="ECO:0000318"/>
    <property type="project" value="GO_Central"/>
</dbReference>
<dbReference type="GO" id="GO:0009134">
    <property type="term" value="P:nucleoside diphosphate catabolic process"/>
    <property type="evidence" value="ECO:0000318"/>
    <property type="project" value="GO_Central"/>
</dbReference>
<dbReference type="CDD" id="cd24041">
    <property type="entry name" value="ASKHA_NBD_AtAPY1-like"/>
    <property type="match status" value="1"/>
</dbReference>
<dbReference type="FunFam" id="3.30.420.150:FF:000008">
    <property type="entry name" value="Apyrase 1"/>
    <property type="match status" value="1"/>
</dbReference>
<dbReference type="Gene3D" id="3.30.420.40">
    <property type="match status" value="1"/>
</dbReference>
<dbReference type="Gene3D" id="3.30.420.150">
    <property type="entry name" value="Exopolyphosphatase. Domain 2"/>
    <property type="match status" value="1"/>
</dbReference>
<dbReference type="InterPro" id="IPR000407">
    <property type="entry name" value="GDA1_CD39_NTPase"/>
</dbReference>
<dbReference type="PANTHER" id="PTHR11782">
    <property type="entry name" value="ADENOSINE/GUANOSINE DIPHOSPHATASE"/>
    <property type="match status" value="1"/>
</dbReference>
<dbReference type="PANTHER" id="PTHR11782:SF83">
    <property type="entry name" value="GUANOSINE-DIPHOSPHATASE"/>
    <property type="match status" value="1"/>
</dbReference>
<dbReference type="Pfam" id="PF01150">
    <property type="entry name" value="GDA1_CD39"/>
    <property type="match status" value="1"/>
</dbReference>
<dbReference type="PROSITE" id="PS01238">
    <property type="entry name" value="GDA1_CD39_NTPASE"/>
    <property type="match status" value="1"/>
</dbReference>
<keyword id="KW-0067">ATP-binding</keyword>
<keyword id="KW-0106">Calcium</keyword>
<keyword id="KW-0378">Hydrolase</keyword>
<keyword id="KW-0472">Membrane</keyword>
<keyword id="KW-0547">Nucleotide-binding</keyword>
<keyword id="KW-1185">Reference proteome</keyword>
<keyword id="KW-0735">Signal-anchor</keyword>
<keyword id="KW-0812">Transmembrane</keyword>
<keyword id="KW-1133">Transmembrane helix</keyword>
<accession>Q8H7L6</accession>
<protein>
    <recommendedName>
        <fullName>Probable apyrase 1</fullName>
        <shortName>OsAPY1</shortName>
        <ecNumber>3.6.1.5</ecNumber>
    </recommendedName>
    <alternativeName>
        <fullName>ATP-diphosphatase</fullName>
    </alternativeName>
    <alternativeName>
        <fullName>ATP-diphosphohydrolase</fullName>
    </alternativeName>
    <alternativeName>
        <fullName>Adenosine diphosphatase</fullName>
        <shortName>ADPase</shortName>
    </alternativeName>
</protein>
<proteinExistence type="inferred from homology"/>
<name>APY1_ORYSJ</name>
<feature type="chain" id="PRO_0000419907" description="Probable apyrase 1">
    <location>
        <begin position="1"/>
        <end position="489"/>
    </location>
</feature>
<feature type="topological domain" description="Cytoplasmic" evidence="2">
    <location>
        <begin position="1"/>
        <end position="28"/>
    </location>
</feature>
<feature type="transmembrane region" description="Helical; Signal-anchor for type II membrane protein" evidence="2">
    <location>
        <begin position="29"/>
        <end position="49"/>
    </location>
</feature>
<feature type="topological domain" description="Extracellular" evidence="2">
    <location>
        <begin position="50"/>
        <end position="489"/>
    </location>
</feature>
<feature type="active site" description="Proton acceptor" evidence="1">
    <location>
        <position position="211"/>
    </location>
</feature>
<feature type="binding site" evidence="3">
    <location>
        <begin position="89"/>
        <end position="99"/>
    </location>
    <ligand>
        <name>ATP</name>
        <dbReference type="ChEBI" id="CHEBI:30616"/>
    </ligand>
</feature>
<feature type="binding site" evidence="3">
    <location>
        <begin position="235"/>
        <end position="245"/>
    </location>
    <ligand>
        <name>ATP</name>
        <dbReference type="ChEBI" id="CHEBI:30616"/>
    </ligand>
</feature>
<sequence length="489" mass="52799">MRRFSAAAGARQQQQQGEAVSDRVLRFRGVLVVVLAPVLLISLVLLLMPRAPASATVEGSAGELVAAAGRRWGPRAVSGLGDGSTRYAVIFDAGSSGSRVHVYCFDGNLDLLPIGKEIELFKQKKPGLSAYAMDPQEAAKSLVSLLEEAEKVIPVELREQTPVRVGATAGLRALGTEKSEEILQAVRDLLQDKSSFRSQPEWVTVLDGSQEGAFQWVTINYLLGNLGKPYSHTVGVVDLGGGSVQMAYAISEKDAGKAPPVAEGEDSYVKELLLKGTTYYLYVHSYLRYGLLAARAEILKAGEGNDYRNCMLEGHHGQYRYGDDIFEASGLSSGASYSKCRAVAVRALKVDEPACTHMKCTFGGVWNGGGGDGQKNLFVASFFFDRAAEAGFVNPKAPFAKVKPSDFEEAARRVCKLNVKDAQATYPDVSEENVPYLCMDLVYQYTLLVDGFGVDPYQDITLVKKVPYSNSFVEAAWPLGSAIEVASSS</sequence>
<gene>
    <name type="primary">APY1</name>
    <name type="ordered locus">Os03g0328400</name>
    <name type="ordered locus">LOC_Os03g21120</name>
    <name type="ORF">OSJNBb0014I10.10</name>
</gene>
<evidence type="ECO:0000250" key="1"/>
<evidence type="ECO:0000255" key="2"/>
<evidence type="ECO:0000305" key="3"/>
<comment type="function">
    <text evidence="1">Catalyzes the hydrolysis of phosphoanhydride bonds of nucleoside tri- and di-phosphates.</text>
</comment>
<comment type="catalytic activity">
    <reaction>
        <text>a ribonucleoside 5'-triphosphate + 2 H2O = a ribonucleoside 5'-phosphate + 2 phosphate + 2 H(+)</text>
        <dbReference type="Rhea" id="RHEA:36795"/>
        <dbReference type="ChEBI" id="CHEBI:15377"/>
        <dbReference type="ChEBI" id="CHEBI:15378"/>
        <dbReference type="ChEBI" id="CHEBI:43474"/>
        <dbReference type="ChEBI" id="CHEBI:58043"/>
        <dbReference type="ChEBI" id="CHEBI:61557"/>
        <dbReference type="EC" id="3.6.1.5"/>
    </reaction>
</comment>
<comment type="cofactor">
    <cofactor evidence="1">
        <name>Ca(2+)</name>
        <dbReference type="ChEBI" id="CHEBI:29108"/>
    </cofactor>
</comment>
<comment type="subcellular location">
    <subcellularLocation>
        <location evidence="1">Membrane</location>
        <topology evidence="1">Single-pass type II membrane protein</topology>
    </subcellularLocation>
</comment>
<comment type="similarity">
    <text evidence="3">Belongs to the GDA1/CD39 NTPase family.</text>
</comment>
<reference key="1">
    <citation type="journal article" date="2005" name="Genome Res.">
        <title>Sequence, annotation, and analysis of synteny between rice chromosome 3 and diverged grass species.</title>
        <authorList>
            <consortium name="The rice chromosome 3 sequencing consortium"/>
            <person name="Buell C.R."/>
            <person name="Yuan Q."/>
            <person name="Ouyang S."/>
            <person name="Liu J."/>
            <person name="Zhu W."/>
            <person name="Wang A."/>
            <person name="Maiti R."/>
            <person name="Haas B."/>
            <person name="Wortman J."/>
            <person name="Pertea M."/>
            <person name="Jones K.M."/>
            <person name="Kim M."/>
            <person name="Overton L."/>
            <person name="Tsitrin T."/>
            <person name="Fadrosh D."/>
            <person name="Bera J."/>
            <person name="Weaver B."/>
            <person name="Jin S."/>
            <person name="Johri S."/>
            <person name="Reardon M."/>
            <person name="Webb K."/>
            <person name="Hill J."/>
            <person name="Moffat K."/>
            <person name="Tallon L."/>
            <person name="Van Aken S."/>
            <person name="Lewis M."/>
            <person name="Utterback T."/>
            <person name="Feldblyum T."/>
            <person name="Zismann V."/>
            <person name="Iobst S."/>
            <person name="Hsiao J."/>
            <person name="de Vazeille A.R."/>
            <person name="Salzberg S.L."/>
            <person name="White O."/>
            <person name="Fraser C.M."/>
            <person name="Yu Y."/>
            <person name="Kim H."/>
            <person name="Rambo T."/>
            <person name="Currie J."/>
            <person name="Collura K."/>
            <person name="Kernodle-Thompson S."/>
            <person name="Wei F."/>
            <person name="Kudrna K."/>
            <person name="Ammiraju J.S.S."/>
            <person name="Luo M."/>
            <person name="Goicoechea J.L."/>
            <person name="Wing R.A."/>
            <person name="Henry D."/>
            <person name="Oates R."/>
            <person name="Palmer M."/>
            <person name="Pries G."/>
            <person name="Saski C."/>
            <person name="Simmons J."/>
            <person name="Soderlund C."/>
            <person name="Nelson W."/>
            <person name="de la Bastide M."/>
            <person name="Spiegel L."/>
            <person name="Nascimento L."/>
            <person name="Huang E."/>
            <person name="Preston R."/>
            <person name="Zutavern T."/>
            <person name="Palmer L."/>
            <person name="O'Shaughnessy A."/>
            <person name="Dike S."/>
            <person name="McCombie W.R."/>
            <person name="Minx P."/>
            <person name="Cordum H."/>
            <person name="Wilson R."/>
            <person name="Jin W."/>
            <person name="Lee H.R."/>
            <person name="Jiang J."/>
            <person name="Jackson S."/>
        </authorList>
    </citation>
    <scope>NUCLEOTIDE SEQUENCE [LARGE SCALE GENOMIC DNA]</scope>
    <source>
        <strain>cv. Nipponbare</strain>
    </source>
</reference>
<reference key="2">
    <citation type="journal article" date="2005" name="Nature">
        <title>The map-based sequence of the rice genome.</title>
        <authorList>
            <consortium name="International rice genome sequencing project (IRGSP)"/>
        </authorList>
    </citation>
    <scope>NUCLEOTIDE SEQUENCE [LARGE SCALE GENOMIC DNA]</scope>
    <source>
        <strain>cv. Nipponbare</strain>
    </source>
</reference>
<reference key="3">
    <citation type="journal article" date="2013" name="Rice">
        <title>Improvement of the Oryza sativa Nipponbare reference genome using next generation sequence and optical map data.</title>
        <authorList>
            <person name="Kawahara Y."/>
            <person name="de la Bastide M."/>
            <person name="Hamilton J.P."/>
            <person name="Kanamori H."/>
            <person name="McCombie W.R."/>
            <person name="Ouyang S."/>
            <person name="Schwartz D.C."/>
            <person name="Tanaka T."/>
            <person name="Wu J."/>
            <person name="Zhou S."/>
            <person name="Childs K.L."/>
            <person name="Davidson R.M."/>
            <person name="Lin H."/>
            <person name="Quesada-Ocampo L."/>
            <person name="Vaillancourt B."/>
            <person name="Sakai H."/>
            <person name="Lee S.S."/>
            <person name="Kim J."/>
            <person name="Numa H."/>
            <person name="Itoh T."/>
            <person name="Buell C.R."/>
            <person name="Matsumoto T."/>
        </authorList>
    </citation>
    <scope>GENOME REANNOTATION</scope>
    <source>
        <strain>cv. Nipponbare</strain>
    </source>
</reference>
<organism>
    <name type="scientific">Oryza sativa subsp. japonica</name>
    <name type="common">Rice</name>
    <dbReference type="NCBI Taxonomy" id="39947"/>
    <lineage>
        <taxon>Eukaryota</taxon>
        <taxon>Viridiplantae</taxon>
        <taxon>Streptophyta</taxon>
        <taxon>Embryophyta</taxon>
        <taxon>Tracheophyta</taxon>
        <taxon>Spermatophyta</taxon>
        <taxon>Magnoliopsida</taxon>
        <taxon>Liliopsida</taxon>
        <taxon>Poales</taxon>
        <taxon>Poaceae</taxon>
        <taxon>BOP clade</taxon>
        <taxon>Oryzoideae</taxon>
        <taxon>Oryzeae</taxon>
        <taxon>Oryzinae</taxon>
        <taxon>Oryza</taxon>
        <taxon>Oryza sativa</taxon>
    </lineage>
</organism>